<name>XERC_AZOVD</name>
<proteinExistence type="inferred from homology"/>
<evidence type="ECO:0000255" key="1">
    <source>
        <dbReference type="HAMAP-Rule" id="MF_01808"/>
    </source>
</evidence>
<evidence type="ECO:0000255" key="2">
    <source>
        <dbReference type="PROSITE-ProRule" id="PRU01246"/>
    </source>
</evidence>
<evidence type="ECO:0000255" key="3">
    <source>
        <dbReference type="PROSITE-ProRule" id="PRU01248"/>
    </source>
</evidence>
<comment type="function">
    <text evidence="1">Site-specific tyrosine recombinase, which acts by catalyzing the cutting and rejoining of the recombining DNA molecules. The XerC-XerD complex is essential to convert dimers of the bacterial chromosome into monomers to permit their segregation at cell division. It also contributes to the segregational stability of plasmids.</text>
</comment>
<comment type="subunit">
    <text evidence="1">Forms a cyclic heterotetrameric complex composed of two molecules of XerC and two molecules of XerD.</text>
</comment>
<comment type="subcellular location">
    <subcellularLocation>
        <location evidence="1">Cytoplasm</location>
    </subcellularLocation>
</comment>
<comment type="similarity">
    <text evidence="1">Belongs to the 'phage' integrase family. XerC subfamily.</text>
</comment>
<reference key="1">
    <citation type="journal article" date="2009" name="J. Bacteriol.">
        <title>Genome sequence of Azotobacter vinelandii, an obligate aerobe specialized to support diverse anaerobic metabolic processes.</title>
        <authorList>
            <person name="Setubal J.C."/>
            <person name="Dos Santos P."/>
            <person name="Goldman B.S."/>
            <person name="Ertesvaag H."/>
            <person name="Espin G."/>
            <person name="Rubio L.M."/>
            <person name="Valla S."/>
            <person name="Almeida N.F."/>
            <person name="Balasubramanian D."/>
            <person name="Cromes L."/>
            <person name="Curatti L."/>
            <person name="Du Z."/>
            <person name="Godsy E."/>
            <person name="Goodner B."/>
            <person name="Hellner-Burris K."/>
            <person name="Hernandez J.A."/>
            <person name="Houmiel K."/>
            <person name="Imperial J."/>
            <person name="Kennedy C."/>
            <person name="Larson T.J."/>
            <person name="Latreille P."/>
            <person name="Ligon L.S."/>
            <person name="Lu J."/>
            <person name="Maerk M."/>
            <person name="Miller N.M."/>
            <person name="Norton S."/>
            <person name="O'Carroll I.P."/>
            <person name="Paulsen I."/>
            <person name="Raulfs E.C."/>
            <person name="Roemer R."/>
            <person name="Rosser J."/>
            <person name="Segura D."/>
            <person name="Slater S."/>
            <person name="Stricklin S.L."/>
            <person name="Studholme D.J."/>
            <person name="Sun J."/>
            <person name="Viana C.J."/>
            <person name="Wallin E."/>
            <person name="Wang B."/>
            <person name="Wheeler C."/>
            <person name="Zhu H."/>
            <person name="Dean D.R."/>
            <person name="Dixon R."/>
            <person name="Wood D."/>
        </authorList>
    </citation>
    <scope>NUCLEOTIDE SEQUENCE [LARGE SCALE GENOMIC DNA]</scope>
    <source>
        <strain>DJ / ATCC BAA-1303</strain>
    </source>
</reference>
<accession>C1DJ58</accession>
<sequence length="299" mass="33842">MQADLDAFLDHLRNERQVSQHTLDGYRRDLAKVHAHCEREGLDAWSALDAGRLRRLIARLHLQGHSSRSLARLLSALRGFYRYLLREGRCRHDPAAGLSPPKGERRLPRTLDADRTQQLLDGAVEDDFIARRDQAMLELFYSSGLRLSELVGLDLDRLDLAAGLVRVHGKGNKARDLPIGSKAREALRAWLSLRAQARPADGALFVGRTGRRLTPRAVQLRVRQAGVRELGQHLHPHMLRHSFASHLLESSQDLRAVQELLGHADIATTQIYTHLDFQHLAAVYDQAHPRARRRKDDTS</sequence>
<organism>
    <name type="scientific">Azotobacter vinelandii (strain DJ / ATCC BAA-1303)</name>
    <dbReference type="NCBI Taxonomy" id="322710"/>
    <lineage>
        <taxon>Bacteria</taxon>
        <taxon>Pseudomonadati</taxon>
        <taxon>Pseudomonadota</taxon>
        <taxon>Gammaproteobacteria</taxon>
        <taxon>Pseudomonadales</taxon>
        <taxon>Pseudomonadaceae</taxon>
        <taxon>Azotobacter</taxon>
    </lineage>
</organism>
<gene>
    <name evidence="1" type="primary">xerC</name>
    <name type="ordered locus">Avin_47730</name>
</gene>
<dbReference type="EMBL" id="CP001157">
    <property type="protein sequence ID" value="ACO80877.1"/>
    <property type="molecule type" value="Genomic_DNA"/>
</dbReference>
<dbReference type="RefSeq" id="WP_012703239.1">
    <property type="nucleotide sequence ID" value="NC_012560.1"/>
</dbReference>
<dbReference type="SMR" id="C1DJ58"/>
<dbReference type="STRING" id="322710.Avin_47730"/>
<dbReference type="EnsemblBacteria" id="ACO80877">
    <property type="protein sequence ID" value="ACO80877"/>
    <property type="gene ID" value="Avin_47730"/>
</dbReference>
<dbReference type="GeneID" id="88187645"/>
<dbReference type="KEGG" id="avn:Avin_47730"/>
<dbReference type="eggNOG" id="COG4973">
    <property type="taxonomic scope" value="Bacteria"/>
</dbReference>
<dbReference type="HOGENOM" id="CLU_027562_9_0_6"/>
<dbReference type="OrthoDB" id="9801717at2"/>
<dbReference type="Proteomes" id="UP000002424">
    <property type="component" value="Chromosome"/>
</dbReference>
<dbReference type="GO" id="GO:0005737">
    <property type="term" value="C:cytoplasm"/>
    <property type="evidence" value="ECO:0007669"/>
    <property type="project" value="UniProtKB-SubCell"/>
</dbReference>
<dbReference type="GO" id="GO:0003677">
    <property type="term" value="F:DNA binding"/>
    <property type="evidence" value="ECO:0007669"/>
    <property type="project" value="UniProtKB-KW"/>
</dbReference>
<dbReference type="GO" id="GO:0009037">
    <property type="term" value="F:tyrosine-based site-specific recombinase activity"/>
    <property type="evidence" value="ECO:0007669"/>
    <property type="project" value="UniProtKB-UniRule"/>
</dbReference>
<dbReference type="GO" id="GO:0051301">
    <property type="term" value="P:cell division"/>
    <property type="evidence" value="ECO:0007669"/>
    <property type="project" value="UniProtKB-KW"/>
</dbReference>
<dbReference type="GO" id="GO:0007059">
    <property type="term" value="P:chromosome segregation"/>
    <property type="evidence" value="ECO:0007669"/>
    <property type="project" value="UniProtKB-UniRule"/>
</dbReference>
<dbReference type="GO" id="GO:0006313">
    <property type="term" value="P:DNA transposition"/>
    <property type="evidence" value="ECO:0007669"/>
    <property type="project" value="UniProtKB-UniRule"/>
</dbReference>
<dbReference type="CDD" id="cd00798">
    <property type="entry name" value="INT_XerDC_C"/>
    <property type="match status" value="1"/>
</dbReference>
<dbReference type="Gene3D" id="1.10.150.130">
    <property type="match status" value="1"/>
</dbReference>
<dbReference type="Gene3D" id="1.10.443.10">
    <property type="entry name" value="Intergrase catalytic core"/>
    <property type="match status" value="1"/>
</dbReference>
<dbReference type="HAMAP" id="MF_01808">
    <property type="entry name" value="Recomb_XerC_XerD"/>
    <property type="match status" value="1"/>
</dbReference>
<dbReference type="InterPro" id="IPR044068">
    <property type="entry name" value="CB"/>
</dbReference>
<dbReference type="InterPro" id="IPR011010">
    <property type="entry name" value="DNA_brk_join_enz"/>
</dbReference>
<dbReference type="InterPro" id="IPR013762">
    <property type="entry name" value="Integrase-like_cat_sf"/>
</dbReference>
<dbReference type="InterPro" id="IPR002104">
    <property type="entry name" value="Integrase_catalytic"/>
</dbReference>
<dbReference type="InterPro" id="IPR010998">
    <property type="entry name" value="Integrase_recombinase_N"/>
</dbReference>
<dbReference type="InterPro" id="IPR004107">
    <property type="entry name" value="Integrase_SAM-like_N"/>
</dbReference>
<dbReference type="InterPro" id="IPR011931">
    <property type="entry name" value="Recomb_XerC"/>
</dbReference>
<dbReference type="InterPro" id="IPR023009">
    <property type="entry name" value="Tyrosine_recombinase_XerC/XerD"/>
</dbReference>
<dbReference type="InterPro" id="IPR050090">
    <property type="entry name" value="Tyrosine_recombinase_XerCD"/>
</dbReference>
<dbReference type="NCBIfam" id="NF001399">
    <property type="entry name" value="PRK00283.1"/>
    <property type="match status" value="1"/>
</dbReference>
<dbReference type="NCBIfam" id="TIGR02224">
    <property type="entry name" value="recomb_XerC"/>
    <property type="match status" value="1"/>
</dbReference>
<dbReference type="PANTHER" id="PTHR30349">
    <property type="entry name" value="PHAGE INTEGRASE-RELATED"/>
    <property type="match status" value="1"/>
</dbReference>
<dbReference type="PANTHER" id="PTHR30349:SF81">
    <property type="entry name" value="TYROSINE RECOMBINASE XERC"/>
    <property type="match status" value="1"/>
</dbReference>
<dbReference type="Pfam" id="PF02899">
    <property type="entry name" value="Phage_int_SAM_1"/>
    <property type="match status" value="1"/>
</dbReference>
<dbReference type="Pfam" id="PF00589">
    <property type="entry name" value="Phage_integrase"/>
    <property type="match status" value="1"/>
</dbReference>
<dbReference type="SUPFAM" id="SSF56349">
    <property type="entry name" value="DNA breaking-rejoining enzymes"/>
    <property type="match status" value="1"/>
</dbReference>
<dbReference type="SUPFAM" id="SSF47823">
    <property type="entry name" value="lambda integrase-like, N-terminal domain"/>
    <property type="match status" value="1"/>
</dbReference>
<dbReference type="PROSITE" id="PS51900">
    <property type="entry name" value="CB"/>
    <property type="match status" value="1"/>
</dbReference>
<dbReference type="PROSITE" id="PS51898">
    <property type="entry name" value="TYR_RECOMBINASE"/>
    <property type="match status" value="1"/>
</dbReference>
<keyword id="KW-0131">Cell cycle</keyword>
<keyword id="KW-0132">Cell division</keyword>
<keyword id="KW-0159">Chromosome partition</keyword>
<keyword id="KW-0963">Cytoplasm</keyword>
<keyword id="KW-0229">DNA integration</keyword>
<keyword id="KW-0233">DNA recombination</keyword>
<keyword id="KW-0238">DNA-binding</keyword>
<protein>
    <recommendedName>
        <fullName evidence="1">Tyrosine recombinase XerC</fullName>
    </recommendedName>
</protein>
<feature type="chain" id="PRO_1000215950" description="Tyrosine recombinase XerC">
    <location>
        <begin position="1"/>
        <end position="299"/>
    </location>
</feature>
<feature type="domain" description="Core-binding (CB)" evidence="3">
    <location>
        <begin position="1"/>
        <end position="85"/>
    </location>
</feature>
<feature type="domain" description="Tyr recombinase" evidence="2">
    <location>
        <begin position="106"/>
        <end position="285"/>
    </location>
</feature>
<feature type="active site" evidence="1">
    <location>
        <position position="146"/>
    </location>
</feature>
<feature type="active site" evidence="1">
    <location>
        <position position="170"/>
    </location>
</feature>
<feature type="active site" evidence="1">
    <location>
        <position position="237"/>
    </location>
</feature>
<feature type="active site" evidence="1">
    <location>
        <position position="240"/>
    </location>
</feature>
<feature type="active site" evidence="1">
    <location>
        <position position="263"/>
    </location>
</feature>
<feature type="active site" description="O-(3'-phospho-DNA)-tyrosine intermediate" evidence="1">
    <location>
        <position position="272"/>
    </location>
</feature>